<accession>A7MIA0</accession>
<evidence type="ECO:0000255" key="1">
    <source>
        <dbReference type="HAMAP-Rule" id="MF_01413"/>
    </source>
</evidence>
<evidence type="ECO:0000255" key="2">
    <source>
        <dbReference type="PROSITE-ProRule" id="PRU00543"/>
    </source>
</evidence>
<evidence type="ECO:0000256" key="3">
    <source>
        <dbReference type="SAM" id="MobiDB-lite"/>
    </source>
</evidence>
<name>KEFC_CROS8</name>
<reference key="1">
    <citation type="journal article" date="2010" name="PLoS ONE">
        <title>Genome sequence of Cronobacter sakazakii BAA-894 and comparative genomic hybridization analysis with other Cronobacter species.</title>
        <authorList>
            <person name="Kucerova E."/>
            <person name="Clifton S.W."/>
            <person name="Xia X.Q."/>
            <person name="Long F."/>
            <person name="Porwollik S."/>
            <person name="Fulton L."/>
            <person name="Fronick C."/>
            <person name="Minx P."/>
            <person name="Kyung K."/>
            <person name="Warren W."/>
            <person name="Fulton R."/>
            <person name="Feng D."/>
            <person name="Wollam A."/>
            <person name="Shah N."/>
            <person name="Bhonagiri V."/>
            <person name="Nash W.E."/>
            <person name="Hallsworth-Pepin K."/>
            <person name="Wilson R.K."/>
            <person name="McClelland M."/>
            <person name="Forsythe S.J."/>
        </authorList>
    </citation>
    <scope>NUCLEOTIDE SEQUENCE [LARGE SCALE GENOMIC DNA]</scope>
    <source>
        <strain>ATCC BAA-894</strain>
    </source>
</reference>
<organism>
    <name type="scientific">Cronobacter sakazakii (strain ATCC BAA-894)</name>
    <name type="common">Enterobacter sakazakii</name>
    <dbReference type="NCBI Taxonomy" id="290339"/>
    <lineage>
        <taxon>Bacteria</taxon>
        <taxon>Pseudomonadati</taxon>
        <taxon>Pseudomonadota</taxon>
        <taxon>Gammaproteobacteria</taxon>
        <taxon>Enterobacterales</taxon>
        <taxon>Enterobacteriaceae</taxon>
        <taxon>Cronobacter</taxon>
    </lineage>
</organism>
<feature type="chain" id="PRO_1000068460" description="Glutathione-regulated potassium-efflux system protein KefC">
    <location>
        <begin position="1"/>
        <end position="620"/>
    </location>
</feature>
<feature type="transmembrane region" description="Helical" evidence="1">
    <location>
        <begin position="4"/>
        <end position="24"/>
    </location>
</feature>
<feature type="transmembrane region" description="Helical" evidence="1">
    <location>
        <begin position="26"/>
        <end position="46"/>
    </location>
</feature>
<feature type="transmembrane region" description="Helical" evidence="1">
    <location>
        <begin position="54"/>
        <end position="74"/>
    </location>
</feature>
<feature type="transmembrane region" description="Helical" evidence="1">
    <location>
        <begin position="86"/>
        <end position="106"/>
    </location>
</feature>
<feature type="transmembrane region" description="Helical" evidence="1">
    <location>
        <begin position="114"/>
        <end position="134"/>
    </location>
</feature>
<feature type="transmembrane region" description="Helical" evidence="1">
    <location>
        <begin position="149"/>
        <end position="169"/>
    </location>
</feature>
<feature type="transmembrane region" description="Helical" evidence="1">
    <location>
        <begin position="178"/>
        <end position="198"/>
    </location>
</feature>
<feature type="transmembrane region" description="Helical" evidence="1">
    <location>
        <begin position="218"/>
        <end position="238"/>
    </location>
</feature>
<feature type="transmembrane region" description="Helical" evidence="1">
    <location>
        <begin position="271"/>
        <end position="291"/>
    </location>
</feature>
<feature type="transmembrane region" description="Helical" evidence="1">
    <location>
        <begin position="296"/>
        <end position="316"/>
    </location>
</feature>
<feature type="transmembrane region" description="Helical" evidence="1">
    <location>
        <begin position="326"/>
        <end position="346"/>
    </location>
</feature>
<feature type="transmembrane region" description="Helical" evidence="1">
    <location>
        <begin position="359"/>
        <end position="379"/>
    </location>
</feature>
<feature type="domain" description="RCK N-terminal" evidence="2">
    <location>
        <begin position="399"/>
        <end position="518"/>
    </location>
</feature>
<feature type="region of interest" description="Disordered" evidence="3">
    <location>
        <begin position="596"/>
        <end position="620"/>
    </location>
</feature>
<dbReference type="EMBL" id="CP000783">
    <property type="protein sequence ID" value="ABU78514.1"/>
    <property type="molecule type" value="Genomic_DNA"/>
</dbReference>
<dbReference type="RefSeq" id="WP_012125788.1">
    <property type="nucleotide sequence ID" value="NC_009778.1"/>
</dbReference>
<dbReference type="SMR" id="A7MIA0"/>
<dbReference type="KEGG" id="esa:ESA_03293"/>
<dbReference type="PATRIC" id="fig|290339.8.peg.2921"/>
<dbReference type="HOGENOM" id="CLU_005126_9_3_6"/>
<dbReference type="Proteomes" id="UP000000260">
    <property type="component" value="Chromosome"/>
</dbReference>
<dbReference type="GO" id="GO:0005886">
    <property type="term" value="C:plasma membrane"/>
    <property type="evidence" value="ECO:0007669"/>
    <property type="project" value="UniProtKB-SubCell"/>
</dbReference>
<dbReference type="GO" id="GO:0019899">
    <property type="term" value="F:enzyme binding"/>
    <property type="evidence" value="ECO:0007669"/>
    <property type="project" value="InterPro"/>
</dbReference>
<dbReference type="GO" id="GO:0015503">
    <property type="term" value="F:glutathione-regulated potassium exporter activity"/>
    <property type="evidence" value="ECO:0007669"/>
    <property type="project" value="UniProtKB-UniRule"/>
</dbReference>
<dbReference type="GO" id="GO:0015643">
    <property type="term" value="F:toxic substance binding"/>
    <property type="evidence" value="ECO:0007669"/>
    <property type="project" value="InterPro"/>
</dbReference>
<dbReference type="GO" id="GO:1902600">
    <property type="term" value="P:proton transmembrane transport"/>
    <property type="evidence" value="ECO:0007669"/>
    <property type="project" value="InterPro"/>
</dbReference>
<dbReference type="GO" id="GO:0051595">
    <property type="term" value="P:response to methylglyoxal"/>
    <property type="evidence" value="ECO:0007669"/>
    <property type="project" value="InterPro"/>
</dbReference>
<dbReference type="FunFam" id="1.20.1530.20:FF:000001">
    <property type="entry name" value="Glutathione-regulated potassium-efflux system protein KefB"/>
    <property type="match status" value="1"/>
</dbReference>
<dbReference type="FunFam" id="3.40.50.720:FF:000036">
    <property type="entry name" value="Glutathione-regulated potassium-efflux system protein KefB"/>
    <property type="match status" value="1"/>
</dbReference>
<dbReference type="Gene3D" id="1.20.1530.20">
    <property type="match status" value="1"/>
</dbReference>
<dbReference type="Gene3D" id="3.40.50.720">
    <property type="entry name" value="NAD(P)-binding Rossmann-like Domain"/>
    <property type="match status" value="1"/>
</dbReference>
<dbReference type="HAMAP" id="MF_01413">
    <property type="entry name" value="K_H_efflux_KefC"/>
    <property type="match status" value="1"/>
</dbReference>
<dbReference type="InterPro" id="IPR006153">
    <property type="entry name" value="Cation/H_exchanger_TM"/>
</dbReference>
<dbReference type="InterPro" id="IPR004771">
    <property type="entry name" value="K/H_exchanger"/>
</dbReference>
<dbReference type="InterPro" id="IPR023941">
    <property type="entry name" value="K_H_efflux_KefC"/>
</dbReference>
<dbReference type="InterPro" id="IPR006036">
    <property type="entry name" value="K_uptake_TrkA"/>
</dbReference>
<dbReference type="InterPro" id="IPR038770">
    <property type="entry name" value="Na+/solute_symporter_sf"/>
</dbReference>
<dbReference type="InterPro" id="IPR036291">
    <property type="entry name" value="NAD(P)-bd_dom_sf"/>
</dbReference>
<dbReference type="InterPro" id="IPR003148">
    <property type="entry name" value="RCK_N"/>
</dbReference>
<dbReference type="NCBIfam" id="TIGR00932">
    <property type="entry name" value="2a37"/>
    <property type="match status" value="1"/>
</dbReference>
<dbReference type="NCBIfam" id="NF002924">
    <property type="entry name" value="PRK03562.1"/>
    <property type="match status" value="1"/>
</dbReference>
<dbReference type="PANTHER" id="PTHR46157:SF3">
    <property type="entry name" value="GLUTATHIONE-REGULATED POTASSIUM-EFFLUX SYSTEM PROTEIN KEFC"/>
    <property type="match status" value="1"/>
</dbReference>
<dbReference type="PANTHER" id="PTHR46157">
    <property type="entry name" value="K(+) EFFLUX ANTIPORTER 3, CHLOROPLASTIC"/>
    <property type="match status" value="1"/>
</dbReference>
<dbReference type="Pfam" id="PF00999">
    <property type="entry name" value="Na_H_Exchanger"/>
    <property type="match status" value="1"/>
</dbReference>
<dbReference type="Pfam" id="PF02254">
    <property type="entry name" value="TrkA_N"/>
    <property type="match status" value="1"/>
</dbReference>
<dbReference type="PRINTS" id="PR00335">
    <property type="entry name" value="KUPTAKETRKA"/>
</dbReference>
<dbReference type="SUPFAM" id="SSF51735">
    <property type="entry name" value="NAD(P)-binding Rossmann-fold domains"/>
    <property type="match status" value="1"/>
</dbReference>
<dbReference type="PROSITE" id="PS51201">
    <property type="entry name" value="RCK_N"/>
    <property type="match status" value="1"/>
</dbReference>
<proteinExistence type="inferred from homology"/>
<comment type="function">
    <text evidence="1">Pore-forming subunit of a potassium efflux system that confers protection against electrophiles. Catalyzes K(+)/H(+) antiport.</text>
</comment>
<comment type="subunit">
    <text evidence="1">Homodimer. Interacts with the regulatory subunit KefF.</text>
</comment>
<comment type="subcellular location">
    <subcellularLocation>
        <location evidence="1">Cell inner membrane</location>
        <topology evidence="1">Multi-pass membrane protein</topology>
    </subcellularLocation>
</comment>
<comment type="similarity">
    <text evidence="1">Belongs to the monovalent cation:proton antiporter 2 (CPA2) transporter (TC 2.A.37) family. KefC subfamily.</text>
</comment>
<sequence length="620" mass="66998">MDSHTLIQALIYLGSAALIVPVAVRLGLGSVLGYLIAGGLIGPWGLRLVTDAQAILHFAEIGVVLMLFVIGLELDPQRLWKLRASVFGGGALQMGACGLLLGGFCVALGLRWQVALLIGLTLALSSTAIAMQAMNERNLTASQMGRSAFAVLLFQDIAAIPLVAMIPLLAASGEATTASAFFLSALKVVGALALVVLLGRFVARPALRFVARSGLREVFSAVALFLVFGFGLLLEEAGLSMAMGAFLAGVLLASSEYRHALESDIEPFKGLLLGLFFIGVGMSIDFGTLVAHPLRVLTLLFGFLIIKTVTLWLVAKPLKVPGRQRRWFAVLLGQGSEFAFVIFGAARSAEVLDAEWAKALTLAVALSMAATPLLLVLLTRLEKSGQQQAREADEIDEEQPRVIIAGFGRFGQIAGRLLLSSGVKMVVLDHDPDHIETLRKFGMKVFYGDATRVDLLESAGVAKAEVLINAIDDPQANLQLTELVQTHFPQVRIIARARDVDHYIRLRQAGVAQPERETFEGALRVGRMALEELGIGSYEARERADLFRCYNQQMVDEMAEGDNDTSARAATFRRTSAMLTEIISEDRAHLSLIQRHGWQGTREGKHTGNDADEPEVKPQP</sequence>
<gene>
    <name evidence="1" type="primary">kefC</name>
    <name type="ordered locus">ESA_03293</name>
</gene>
<protein>
    <recommendedName>
        <fullName evidence="1">Glutathione-regulated potassium-efflux system protein KefC</fullName>
    </recommendedName>
    <alternativeName>
        <fullName evidence="1">K(+)/H(+) antiporter</fullName>
    </alternativeName>
</protein>
<keyword id="KW-0050">Antiport</keyword>
<keyword id="KW-0997">Cell inner membrane</keyword>
<keyword id="KW-1003">Cell membrane</keyword>
<keyword id="KW-0406">Ion transport</keyword>
<keyword id="KW-0472">Membrane</keyword>
<keyword id="KW-0630">Potassium</keyword>
<keyword id="KW-0633">Potassium transport</keyword>
<keyword id="KW-1185">Reference proteome</keyword>
<keyword id="KW-0812">Transmembrane</keyword>
<keyword id="KW-1133">Transmembrane helix</keyword>
<keyword id="KW-0813">Transport</keyword>